<reference key="1">
    <citation type="journal article" date="2013" name="Lipids">
        <title>A trichome-specific linoleate lipoxygenase expressed during pyrethrin biosynthesis in pyrethrum.</title>
        <authorList>
            <person name="Ramirez A.M."/>
            <person name="Yang T."/>
            <person name="Bouwmeester H.J."/>
            <person name="Jongsma M.A."/>
        </authorList>
    </citation>
    <scope>NUCLEOTIDE SEQUENCE [MRNA]</scope>
    <scope>FUNCTION</scope>
    <scope>CATALYTIC ACTIVITY</scope>
    <scope>TISSUE SPECIFICITY</scope>
    <scope>DEVELOPMENTAL STAGE</scope>
    <scope>PATHWAY</scope>
</reference>
<reference key="2">
    <citation type="journal article" date="2005" name="Phytochemistry">
        <title>Biosynthesis of pyrethrin I in seedlings of Chrysanthemum cinerariaefolium.</title>
        <authorList>
            <person name="Matsuda K."/>
            <person name="Kikuta Y."/>
            <person name="Haba A."/>
            <person name="Nakayama K."/>
            <person name="Katsuda Y."/>
            <person name="Hatanaka A."/>
            <person name="Komai K."/>
        </authorList>
    </citation>
    <scope>REVIEW</scope>
</reference>
<reference key="3">
    <citation type="journal article" date="2019" name="Nat. Prod. Rep.">
        <title>Non-volatile natural products in plant glandular trichomes: chemistry, biological activities and biosynthesis.</title>
        <authorList>
            <person name="Liu Y."/>
            <person name="Jing S.-X."/>
            <person name="Luo S.-H."/>
            <person name="Li S.-H."/>
        </authorList>
    </citation>
    <scope>REVIEW</scope>
</reference>
<proteinExistence type="evidence at protein level"/>
<comment type="function">
    <text evidence="3 4 6">Component of the monoterpenoid pyrethrins biosynthesis; pyrethrins are widely used plant-derived pesticide (PubMed:30468448). Plant lipoxygenases may be involved in a number of diverse aspects of plant physiology including growth and development, pest resistance, and senescence or responses to wounding. Catalyzes the hydroperoxidation of lipids containing a cis,cis-1,4-pentadiene structure (By similarity). Mediates the peroxidation of linolenic acid leading to the production of 13-hydroperoxylinolenic acid (PubMed:23893337).</text>
</comment>
<comment type="catalytic activity">
    <reaction evidence="4">
        <text>(9Z,12Z,15Z)-octadecatrienoate + O2 = 13-hydroperoxy-(9Z,11E,15Z)-octadecatrienoate</text>
        <dbReference type="Rhea" id="RHEA:60904"/>
        <dbReference type="ChEBI" id="CHEBI:15379"/>
        <dbReference type="ChEBI" id="CHEBI:32387"/>
        <dbReference type="ChEBI" id="CHEBI:144034"/>
    </reaction>
    <physiologicalReaction direction="left-to-right" evidence="4">
        <dbReference type="Rhea" id="RHEA:60905"/>
    </physiologicalReaction>
</comment>
<comment type="cofactor">
    <cofactor evidence="3">
        <name>Fe cation</name>
        <dbReference type="ChEBI" id="CHEBI:24875"/>
    </cofactor>
    <text evidence="3">Binds 1 Fe cation per subunit.</text>
</comment>
<comment type="pathway">
    <text evidence="3">Lipid metabolism; oxylipin biosynthesis.</text>
</comment>
<comment type="pathway">
    <text evidence="4">Isoprenoid biosynthesis.</text>
</comment>
<comment type="subcellular location">
    <subcellularLocation>
        <location evidence="1">Plastid</location>
        <location evidence="1">Chloroplast</location>
    </subcellularLocation>
</comment>
<comment type="tissue specificity">
    <text evidence="4">Confined to glandular trichomes in flowers, and, at low levels, in leaves.</text>
</comment>
<comment type="developmental stage">
    <text evidence="4">In flowers, expressed in early developmental stages and fades out progressively in later stages.</text>
</comment>
<comment type="similarity">
    <text evidence="7">Belongs to the lipoxygenase family.</text>
</comment>
<protein>
    <recommendedName>
        <fullName evidence="5">Lipoxygenase 1, chloroplastic</fullName>
        <shortName evidence="5">TcLOX1</shortName>
        <ecNumber evidence="3 4">1.13.11.-</ecNumber>
    </recommendedName>
    <alternativeName>
        <fullName evidence="8">13-hydroperoxylinolenic acid synthase</fullName>
    </alternativeName>
</protein>
<accession>R9WTS6</accession>
<feature type="transit peptide" description="Chloroplast" evidence="1">
    <location>
        <begin position="1"/>
        <end position="49"/>
    </location>
</feature>
<feature type="chain" id="PRO_0000447850" description="Lipoxygenase 1, chloroplastic">
    <location>
        <begin position="50"/>
        <end position="907"/>
    </location>
</feature>
<feature type="domain" description="PLAT" evidence="2">
    <location>
        <begin position="85"/>
        <end position="209"/>
    </location>
</feature>
<feature type="domain" description="Lipoxygenase" evidence="3">
    <location>
        <begin position="212"/>
        <end position="907"/>
    </location>
</feature>
<feature type="binding site" evidence="3">
    <location>
        <position position="567"/>
    </location>
    <ligand>
        <name>Fe cation</name>
        <dbReference type="ChEBI" id="CHEBI:24875"/>
        <note>catalytic</note>
    </ligand>
</feature>
<feature type="binding site" evidence="3">
    <location>
        <position position="572"/>
    </location>
    <ligand>
        <name>Fe cation</name>
        <dbReference type="ChEBI" id="CHEBI:24875"/>
        <note>catalytic</note>
    </ligand>
</feature>
<feature type="binding site" evidence="3">
    <location>
        <position position="758"/>
    </location>
    <ligand>
        <name>Fe cation</name>
        <dbReference type="ChEBI" id="CHEBI:24875"/>
        <note>catalytic</note>
    </ligand>
</feature>
<feature type="binding site" evidence="3">
    <location>
        <position position="762"/>
    </location>
    <ligand>
        <name>Fe cation</name>
        <dbReference type="ChEBI" id="CHEBI:24875"/>
        <note>catalytic</note>
    </ligand>
</feature>
<feature type="binding site" evidence="3">
    <location>
        <position position="907"/>
    </location>
    <ligand>
        <name>Fe cation</name>
        <dbReference type="ChEBI" id="CHEBI:24875"/>
        <note>catalytic</note>
    </ligand>
</feature>
<organism>
    <name type="scientific">Tanacetum cinerariifolium</name>
    <name type="common">Dalmatian daisy</name>
    <name type="synonym">Chrysanthemum cinerariifolium</name>
    <dbReference type="NCBI Taxonomy" id="118510"/>
    <lineage>
        <taxon>Eukaryota</taxon>
        <taxon>Viridiplantae</taxon>
        <taxon>Streptophyta</taxon>
        <taxon>Embryophyta</taxon>
        <taxon>Tracheophyta</taxon>
        <taxon>Spermatophyta</taxon>
        <taxon>Magnoliopsida</taxon>
        <taxon>eudicotyledons</taxon>
        <taxon>Gunneridae</taxon>
        <taxon>Pentapetalae</taxon>
        <taxon>asterids</taxon>
        <taxon>campanulids</taxon>
        <taxon>Asterales</taxon>
        <taxon>Asteraceae</taxon>
        <taxon>Asteroideae</taxon>
        <taxon>Anthemideae</taxon>
        <taxon>Anthemidinae</taxon>
        <taxon>Tanacetum</taxon>
    </lineage>
</organism>
<evidence type="ECO:0000255" key="1"/>
<evidence type="ECO:0000255" key="2">
    <source>
        <dbReference type="PROSITE-ProRule" id="PRU00152"/>
    </source>
</evidence>
<evidence type="ECO:0000255" key="3">
    <source>
        <dbReference type="PROSITE-ProRule" id="PRU00726"/>
    </source>
</evidence>
<evidence type="ECO:0000269" key="4">
    <source>
    </source>
</evidence>
<evidence type="ECO:0000303" key="5">
    <source>
    </source>
</evidence>
<evidence type="ECO:0000303" key="6">
    <source>
    </source>
</evidence>
<evidence type="ECO:0000305" key="7"/>
<evidence type="ECO:0000305" key="8">
    <source>
    </source>
</evidence>
<sequence>MALAKQIMGASLMDQKTSVFGSNLCLNHVLVNKHRLRLRKTRKNGSMVVAAISEDLVKLXRVEKEKPVTFKVRAVLTVRNKNKEDFFKDTIFRKIDAITDQIGWNVVIQLFSNDIDPRTRAAKKSNEAVLKDWSKKSNVKTERVNYTADIMVDSDFGIPGAITISNKHQKEFFLETITIEGFACGPVHFPCNSWVQSTKDLPNPRIFFTNQPYLPDETPVGLKSLRYQELKDLRGDGTGVRKLSDRIYDYDVYNDLGNPDRGNDFVRPTLGGEKIPYPRRCRTGRVPSDTDITAESRVEKPFPLYVPRDEQFEESKANAFSTGRLRAVLHNLLPSMVTSISKKNDFKGFSQIDSLYSEGVFLKLGLQDDLLKKLPLPNLVTRLHESSQGGGLLKYDTPKILSKDKFAWLRDDEFARQTIAGVNPVSIEKLKVFPPVSQLDPEKHGPQESALREEHIVGFLDGRTVKQAIEEDKLFIIDYHDIYLPFLDRINALDGRKAYATRTIFYLNPSGTLKPVAIELSLPQALPGSESKRVLTPPSDATSNWMWQLAKAHXCSNDAGAHQLVHHFLRTHAAIEPFILAAHRQLSAMHPIYKLLDPHMRYTLEINQLARQNLINADGVIEACFTPGRYGMEISASAYKNWRFDLEGLPADLIRRGMAVPDPSKPHGLKLVMEDYPYASDGLMIWEAIQNWVKTYVNHYYPDSAQVCNDRELQAWYAESINVGHADLRHKDWWPTLAGADDLTSVLTTIIWLASAQHAALNFGQYPYGGYIPNRPPLMRRLLPDVNDPEYLSFHDDPQKYFLSALPSLLQSTKYMAVVDTLSTHSPDEEYIGERQQTDTWSGDAEIVEAFYAFSAEIQRIEKEIEKRNSDTSLKNRCGAGVLPYELLAPSSGPGATCRGVPNSISI</sequence>
<dbReference type="EC" id="1.13.11.-" evidence="3 4"/>
<dbReference type="EMBL" id="KC441523">
    <property type="protein sequence ID" value="AGO03785.1"/>
    <property type="molecule type" value="mRNA"/>
</dbReference>
<dbReference type="UniPathway" id="UPA00382"/>
<dbReference type="GO" id="GO:0009507">
    <property type="term" value="C:chloroplast"/>
    <property type="evidence" value="ECO:0007669"/>
    <property type="project" value="UniProtKB-SubCell"/>
</dbReference>
<dbReference type="GO" id="GO:0046872">
    <property type="term" value="F:metal ion binding"/>
    <property type="evidence" value="ECO:0007669"/>
    <property type="project" value="UniProtKB-KW"/>
</dbReference>
<dbReference type="GO" id="GO:0016702">
    <property type="term" value="F:oxidoreductase activity, acting on single donors with incorporation of molecular oxygen, incorporation of two atoms of oxygen"/>
    <property type="evidence" value="ECO:0007669"/>
    <property type="project" value="InterPro"/>
</dbReference>
<dbReference type="GO" id="GO:0006633">
    <property type="term" value="P:fatty acid biosynthetic process"/>
    <property type="evidence" value="ECO:0007669"/>
    <property type="project" value="UniProtKB-KW"/>
</dbReference>
<dbReference type="GO" id="GO:0008299">
    <property type="term" value="P:isoprenoid biosynthetic process"/>
    <property type="evidence" value="ECO:0000314"/>
    <property type="project" value="UniProtKB"/>
</dbReference>
<dbReference type="GO" id="GO:0034440">
    <property type="term" value="P:lipid oxidation"/>
    <property type="evidence" value="ECO:0007669"/>
    <property type="project" value="InterPro"/>
</dbReference>
<dbReference type="GO" id="GO:0031408">
    <property type="term" value="P:oxylipin biosynthetic process"/>
    <property type="evidence" value="ECO:0007669"/>
    <property type="project" value="UniProtKB-UniPathway"/>
</dbReference>
<dbReference type="CDD" id="cd01751">
    <property type="entry name" value="PLAT_LH2"/>
    <property type="match status" value="1"/>
</dbReference>
<dbReference type="FunFam" id="1.20.245.10:FF:000002">
    <property type="entry name" value="Lipoxygenase"/>
    <property type="match status" value="1"/>
</dbReference>
<dbReference type="FunFam" id="3.10.450.60:FF:000002">
    <property type="entry name" value="Lipoxygenase"/>
    <property type="match status" value="1"/>
</dbReference>
<dbReference type="FunFam" id="4.10.372.10:FF:000001">
    <property type="entry name" value="Lipoxygenase"/>
    <property type="match status" value="1"/>
</dbReference>
<dbReference type="FunFam" id="4.10.375.10:FF:000001">
    <property type="entry name" value="Lipoxygenase"/>
    <property type="match status" value="1"/>
</dbReference>
<dbReference type="Gene3D" id="3.10.450.60">
    <property type="match status" value="1"/>
</dbReference>
<dbReference type="Gene3D" id="4.10.375.10">
    <property type="entry name" value="Lipoxygenase-1, Domain 2"/>
    <property type="match status" value="1"/>
</dbReference>
<dbReference type="Gene3D" id="4.10.372.10">
    <property type="entry name" value="Lipoxygenase-1, Domain 3"/>
    <property type="match status" value="1"/>
</dbReference>
<dbReference type="Gene3D" id="1.20.245.10">
    <property type="entry name" value="Lipoxygenase-1, Domain 5"/>
    <property type="match status" value="1"/>
</dbReference>
<dbReference type="Gene3D" id="2.60.60.20">
    <property type="entry name" value="PLAT/LH2 domain"/>
    <property type="match status" value="1"/>
</dbReference>
<dbReference type="InterPro" id="IPR000907">
    <property type="entry name" value="LipOase"/>
</dbReference>
<dbReference type="InterPro" id="IPR013819">
    <property type="entry name" value="LipOase_C"/>
</dbReference>
<dbReference type="InterPro" id="IPR036226">
    <property type="entry name" value="LipOase_C_sf"/>
</dbReference>
<dbReference type="InterPro" id="IPR020834">
    <property type="entry name" value="LipOase_CS"/>
</dbReference>
<dbReference type="InterPro" id="IPR020833">
    <property type="entry name" value="LipOase_Fe_BS"/>
</dbReference>
<dbReference type="InterPro" id="IPR001246">
    <property type="entry name" value="LipOase_plant"/>
</dbReference>
<dbReference type="InterPro" id="IPR042057">
    <property type="entry name" value="Lipoxy_PLAT/LH2"/>
</dbReference>
<dbReference type="InterPro" id="IPR027433">
    <property type="entry name" value="Lipoxygenase_dom_3"/>
</dbReference>
<dbReference type="InterPro" id="IPR001024">
    <property type="entry name" value="PLAT/LH2_dom"/>
</dbReference>
<dbReference type="InterPro" id="IPR036392">
    <property type="entry name" value="PLAT/LH2_dom_sf"/>
</dbReference>
<dbReference type="PANTHER" id="PTHR11771">
    <property type="entry name" value="LIPOXYGENASE"/>
    <property type="match status" value="1"/>
</dbReference>
<dbReference type="Pfam" id="PF00305">
    <property type="entry name" value="Lipoxygenase"/>
    <property type="match status" value="1"/>
</dbReference>
<dbReference type="Pfam" id="PF01477">
    <property type="entry name" value="PLAT"/>
    <property type="match status" value="1"/>
</dbReference>
<dbReference type="PRINTS" id="PR00087">
    <property type="entry name" value="LIPOXYGENASE"/>
</dbReference>
<dbReference type="PRINTS" id="PR00468">
    <property type="entry name" value="PLTLPOXGNASE"/>
</dbReference>
<dbReference type="SMART" id="SM00308">
    <property type="entry name" value="LH2"/>
    <property type="match status" value="1"/>
</dbReference>
<dbReference type="SUPFAM" id="SSF49723">
    <property type="entry name" value="Lipase/lipooxygenase domain (PLAT/LH2 domain)"/>
    <property type="match status" value="1"/>
</dbReference>
<dbReference type="SUPFAM" id="SSF48484">
    <property type="entry name" value="Lipoxigenase"/>
    <property type="match status" value="1"/>
</dbReference>
<dbReference type="PROSITE" id="PS00711">
    <property type="entry name" value="LIPOXYGENASE_1"/>
    <property type="match status" value="1"/>
</dbReference>
<dbReference type="PROSITE" id="PS00081">
    <property type="entry name" value="LIPOXYGENASE_2"/>
    <property type="match status" value="1"/>
</dbReference>
<dbReference type="PROSITE" id="PS51393">
    <property type="entry name" value="LIPOXYGENASE_3"/>
    <property type="match status" value="1"/>
</dbReference>
<dbReference type="PROSITE" id="PS50095">
    <property type="entry name" value="PLAT"/>
    <property type="match status" value="1"/>
</dbReference>
<name>LOX1_TANCI</name>
<keyword id="KW-0150">Chloroplast</keyword>
<keyword id="KW-0223">Dioxygenase</keyword>
<keyword id="KW-0275">Fatty acid biosynthesis</keyword>
<keyword id="KW-0276">Fatty acid metabolism</keyword>
<keyword id="KW-0408">Iron</keyword>
<keyword id="KW-0444">Lipid biosynthesis</keyword>
<keyword id="KW-0443">Lipid metabolism</keyword>
<keyword id="KW-0479">Metal-binding</keyword>
<keyword id="KW-0560">Oxidoreductase</keyword>
<keyword id="KW-0925">Oxylipin biosynthesis</keyword>
<keyword id="KW-0934">Plastid</keyword>
<keyword id="KW-0809">Transit peptide</keyword>
<gene>
    <name evidence="5" type="primary">LOX1</name>
</gene>